<evidence type="ECO:0000255" key="1">
    <source>
        <dbReference type="HAMAP-Rule" id="MF_00098"/>
    </source>
</evidence>
<sequence>MTQVAKKILVTCALPYANGSIHLGHMLEHIQADVWVRYQRMRGHEVNFICADDAHGTPIMLKAQQLGITPEQMIGEMSQEHQTDFAGFNISYDNYHSTHSEENRQLSELIYSRLKENGFIKNRTISQLYDPEKGMFLPDRFVKGTCPKCKSPDQYGDNCEVCGATYSPTELIEPKSVVSGATPVMRDSEHFFFDLPSFSEMLQAWTRSGALQEQVANKMQEWFESGLQQWDISRDAPYFGFEIPNAPGKYFYVWLDAPIGYMGSFKNLCDKRGDSVSFDEYWKKDSTAELYHFIGKDIVYFHSLFWPAMLEGSNFRKPSNLFVHGYVTVNGAKMSKSRGTFIKASTWLNHFDADSLRYYYTAKLSSRIDDIDLNLEDFVQRVNADIVNKVVNLASRNAGFINKRFDGVLASELADPQLYKTFTDAAEVIGEAWESREFGKAVREIMALADLANRYVDEQAPWVVAKQEGRDADLQAICSMGINLFRVLMTYLKPVLPKLTERAEAFLNTELTWDGIQQPLLGHKVNPFKALYNRIDMRQVEALVEASKEEVKAAAAPVTGPLADDPIQETITFDDFAKVDLRVALIENAEFVEGSDKLLRLTLDLGGEKRNVFSGIRSAYPDPQALIGRHTIMVANLAPRKMRFGISEGMVMAAGPGGKDIFLLSPDAGAKPGHQVK</sequence>
<accession>C4ZSJ8</accession>
<gene>
    <name evidence="1" type="primary">metG</name>
    <name type="ordered locus">BWG_1900</name>
</gene>
<comment type="function">
    <text evidence="1">Is required not only for elongation of protein synthesis but also for the initiation of all mRNA translation through initiator tRNA(fMet) aminoacylation.</text>
</comment>
<comment type="catalytic activity">
    <reaction evidence="1">
        <text>tRNA(Met) + L-methionine + ATP = L-methionyl-tRNA(Met) + AMP + diphosphate</text>
        <dbReference type="Rhea" id="RHEA:13481"/>
        <dbReference type="Rhea" id="RHEA-COMP:9667"/>
        <dbReference type="Rhea" id="RHEA-COMP:9698"/>
        <dbReference type="ChEBI" id="CHEBI:30616"/>
        <dbReference type="ChEBI" id="CHEBI:33019"/>
        <dbReference type="ChEBI" id="CHEBI:57844"/>
        <dbReference type="ChEBI" id="CHEBI:78442"/>
        <dbReference type="ChEBI" id="CHEBI:78530"/>
        <dbReference type="ChEBI" id="CHEBI:456215"/>
        <dbReference type="EC" id="6.1.1.10"/>
    </reaction>
</comment>
<comment type="cofactor">
    <cofactor evidence="1">
        <name>Zn(2+)</name>
        <dbReference type="ChEBI" id="CHEBI:29105"/>
    </cofactor>
    <text evidence="1">Binds 1 zinc ion per subunit.</text>
</comment>
<comment type="subunit">
    <text evidence="1">Homodimer.</text>
</comment>
<comment type="subcellular location">
    <subcellularLocation>
        <location evidence="1">Cytoplasm</location>
    </subcellularLocation>
</comment>
<comment type="similarity">
    <text evidence="1">Belongs to the class-I aminoacyl-tRNA synthetase family. MetG type 1 subfamily.</text>
</comment>
<keyword id="KW-0030">Aminoacyl-tRNA synthetase</keyword>
<keyword id="KW-0067">ATP-binding</keyword>
<keyword id="KW-0963">Cytoplasm</keyword>
<keyword id="KW-0436">Ligase</keyword>
<keyword id="KW-0479">Metal-binding</keyword>
<keyword id="KW-0547">Nucleotide-binding</keyword>
<keyword id="KW-0648">Protein biosynthesis</keyword>
<keyword id="KW-0694">RNA-binding</keyword>
<keyword id="KW-0820">tRNA-binding</keyword>
<keyword id="KW-0862">Zinc</keyword>
<proteinExistence type="inferred from homology"/>
<name>SYM_ECOBW</name>
<feature type="chain" id="PRO_1000202756" description="Methionine--tRNA ligase">
    <location>
        <begin position="1"/>
        <end position="677"/>
    </location>
</feature>
<feature type="domain" description="tRNA-binding" evidence="1">
    <location>
        <begin position="575"/>
        <end position="677"/>
    </location>
</feature>
<feature type="short sequence motif" description="'HIGH' region">
    <location>
        <begin position="15"/>
        <end position="25"/>
    </location>
</feature>
<feature type="short sequence motif" description="'KMSKS' region">
    <location>
        <begin position="333"/>
        <end position="337"/>
    </location>
</feature>
<feature type="binding site" evidence="1">
    <location>
        <position position="146"/>
    </location>
    <ligand>
        <name>Zn(2+)</name>
        <dbReference type="ChEBI" id="CHEBI:29105"/>
    </ligand>
</feature>
<feature type="binding site" evidence="1">
    <location>
        <position position="149"/>
    </location>
    <ligand>
        <name>Zn(2+)</name>
        <dbReference type="ChEBI" id="CHEBI:29105"/>
    </ligand>
</feature>
<feature type="binding site" evidence="1">
    <location>
        <position position="159"/>
    </location>
    <ligand>
        <name>Zn(2+)</name>
        <dbReference type="ChEBI" id="CHEBI:29105"/>
    </ligand>
</feature>
<feature type="binding site" evidence="1">
    <location>
        <position position="162"/>
    </location>
    <ligand>
        <name>Zn(2+)</name>
        <dbReference type="ChEBI" id="CHEBI:29105"/>
    </ligand>
</feature>
<feature type="binding site" evidence="1">
    <location>
        <position position="336"/>
    </location>
    <ligand>
        <name>ATP</name>
        <dbReference type="ChEBI" id="CHEBI:30616"/>
    </ligand>
</feature>
<reference key="1">
    <citation type="journal article" date="2009" name="J. Bacteriol.">
        <title>Genomic sequencing reveals regulatory mutations and recombinational events in the widely used MC4100 lineage of Escherichia coli K-12.</title>
        <authorList>
            <person name="Ferenci T."/>
            <person name="Zhou Z."/>
            <person name="Betteridge T."/>
            <person name="Ren Y."/>
            <person name="Liu Y."/>
            <person name="Feng L."/>
            <person name="Reeves P.R."/>
            <person name="Wang L."/>
        </authorList>
    </citation>
    <scope>NUCLEOTIDE SEQUENCE [LARGE SCALE GENOMIC DNA]</scope>
    <source>
        <strain>K12 / MC4100 / BW2952</strain>
    </source>
</reference>
<organism>
    <name type="scientific">Escherichia coli (strain K12 / MC4100 / BW2952)</name>
    <dbReference type="NCBI Taxonomy" id="595496"/>
    <lineage>
        <taxon>Bacteria</taxon>
        <taxon>Pseudomonadati</taxon>
        <taxon>Pseudomonadota</taxon>
        <taxon>Gammaproteobacteria</taxon>
        <taxon>Enterobacterales</taxon>
        <taxon>Enterobacteriaceae</taxon>
        <taxon>Escherichia</taxon>
    </lineage>
</organism>
<dbReference type="EC" id="6.1.1.10" evidence="1"/>
<dbReference type="EMBL" id="CP001396">
    <property type="protein sequence ID" value="ACR63756.1"/>
    <property type="molecule type" value="Genomic_DNA"/>
</dbReference>
<dbReference type="RefSeq" id="WP_001350533.1">
    <property type="nucleotide sequence ID" value="NC_012759.1"/>
</dbReference>
<dbReference type="SMR" id="C4ZSJ8"/>
<dbReference type="KEGG" id="ebw:BWG_1900"/>
<dbReference type="HOGENOM" id="CLU_009710_7_0_6"/>
<dbReference type="GO" id="GO:0005829">
    <property type="term" value="C:cytosol"/>
    <property type="evidence" value="ECO:0007669"/>
    <property type="project" value="TreeGrafter"/>
</dbReference>
<dbReference type="GO" id="GO:0005524">
    <property type="term" value="F:ATP binding"/>
    <property type="evidence" value="ECO:0007669"/>
    <property type="project" value="UniProtKB-UniRule"/>
</dbReference>
<dbReference type="GO" id="GO:0046872">
    <property type="term" value="F:metal ion binding"/>
    <property type="evidence" value="ECO:0007669"/>
    <property type="project" value="UniProtKB-KW"/>
</dbReference>
<dbReference type="GO" id="GO:0004825">
    <property type="term" value="F:methionine-tRNA ligase activity"/>
    <property type="evidence" value="ECO:0007669"/>
    <property type="project" value="UniProtKB-UniRule"/>
</dbReference>
<dbReference type="GO" id="GO:0000049">
    <property type="term" value="F:tRNA binding"/>
    <property type="evidence" value="ECO:0007669"/>
    <property type="project" value="UniProtKB-KW"/>
</dbReference>
<dbReference type="GO" id="GO:0006431">
    <property type="term" value="P:methionyl-tRNA aminoacylation"/>
    <property type="evidence" value="ECO:0007669"/>
    <property type="project" value="UniProtKB-UniRule"/>
</dbReference>
<dbReference type="CDD" id="cd07957">
    <property type="entry name" value="Anticodon_Ia_Met"/>
    <property type="match status" value="1"/>
</dbReference>
<dbReference type="CDD" id="cd00814">
    <property type="entry name" value="MetRS_core"/>
    <property type="match status" value="1"/>
</dbReference>
<dbReference type="CDD" id="cd02800">
    <property type="entry name" value="tRNA_bind_EcMetRS_like"/>
    <property type="match status" value="1"/>
</dbReference>
<dbReference type="FunFam" id="1.10.730.10:FF:000005">
    <property type="entry name" value="Methionine--tRNA ligase"/>
    <property type="match status" value="1"/>
</dbReference>
<dbReference type="FunFam" id="2.20.28.20:FF:000001">
    <property type="entry name" value="Methionine--tRNA ligase"/>
    <property type="match status" value="1"/>
</dbReference>
<dbReference type="FunFam" id="2.40.50.140:FF:000042">
    <property type="entry name" value="Methionine--tRNA ligase"/>
    <property type="match status" value="1"/>
</dbReference>
<dbReference type="Gene3D" id="3.40.50.620">
    <property type="entry name" value="HUPs"/>
    <property type="match status" value="1"/>
</dbReference>
<dbReference type="Gene3D" id="1.10.730.10">
    <property type="entry name" value="Isoleucyl-tRNA Synthetase, Domain 1"/>
    <property type="match status" value="1"/>
</dbReference>
<dbReference type="Gene3D" id="2.20.28.20">
    <property type="entry name" value="Methionyl-tRNA synthetase, Zn-domain"/>
    <property type="match status" value="1"/>
</dbReference>
<dbReference type="Gene3D" id="2.40.50.140">
    <property type="entry name" value="Nucleic acid-binding proteins"/>
    <property type="match status" value="1"/>
</dbReference>
<dbReference type="HAMAP" id="MF_00098">
    <property type="entry name" value="Met_tRNA_synth_type1"/>
    <property type="match status" value="1"/>
</dbReference>
<dbReference type="InterPro" id="IPR001412">
    <property type="entry name" value="aa-tRNA-synth_I_CS"/>
</dbReference>
<dbReference type="InterPro" id="IPR041872">
    <property type="entry name" value="Anticodon_Met"/>
</dbReference>
<dbReference type="InterPro" id="IPR004495">
    <property type="entry name" value="Met-tRNA-synth_bsu_C"/>
</dbReference>
<dbReference type="InterPro" id="IPR023458">
    <property type="entry name" value="Met-tRNA_ligase_1"/>
</dbReference>
<dbReference type="InterPro" id="IPR014758">
    <property type="entry name" value="Met-tRNA_synth"/>
</dbReference>
<dbReference type="InterPro" id="IPR015413">
    <property type="entry name" value="Methionyl/Leucyl_tRNA_Synth"/>
</dbReference>
<dbReference type="InterPro" id="IPR033911">
    <property type="entry name" value="MetRS_core"/>
</dbReference>
<dbReference type="InterPro" id="IPR029038">
    <property type="entry name" value="MetRS_Zn"/>
</dbReference>
<dbReference type="InterPro" id="IPR012340">
    <property type="entry name" value="NA-bd_OB-fold"/>
</dbReference>
<dbReference type="InterPro" id="IPR014729">
    <property type="entry name" value="Rossmann-like_a/b/a_fold"/>
</dbReference>
<dbReference type="InterPro" id="IPR002547">
    <property type="entry name" value="tRNA-bd_dom"/>
</dbReference>
<dbReference type="InterPro" id="IPR009080">
    <property type="entry name" value="tRNAsynth_Ia_anticodon-bd"/>
</dbReference>
<dbReference type="NCBIfam" id="TIGR00398">
    <property type="entry name" value="metG"/>
    <property type="match status" value="1"/>
</dbReference>
<dbReference type="NCBIfam" id="TIGR00399">
    <property type="entry name" value="metG_C_term"/>
    <property type="match status" value="1"/>
</dbReference>
<dbReference type="NCBIfam" id="NF001100">
    <property type="entry name" value="PRK00133.1"/>
    <property type="match status" value="1"/>
</dbReference>
<dbReference type="PANTHER" id="PTHR45765">
    <property type="entry name" value="METHIONINE--TRNA LIGASE"/>
    <property type="match status" value="1"/>
</dbReference>
<dbReference type="PANTHER" id="PTHR45765:SF1">
    <property type="entry name" value="METHIONINE--TRNA LIGASE, CYTOPLASMIC"/>
    <property type="match status" value="1"/>
</dbReference>
<dbReference type="Pfam" id="PF19303">
    <property type="entry name" value="Anticodon_3"/>
    <property type="match status" value="1"/>
</dbReference>
<dbReference type="Pfam" id="PF09334">
    <property type="entry name" value="tRNA-synt_1g"/>
    <property type="match status" value="1"/>
</dbReference>
<dbReference type="Pfam" id="PF01588">
    <property type="entry name" value="tRNA_bind"/>
    <property type="match status" value="1"/>
</dbReference>
<dbReference type="PRINTS" id="PR01041">
    <property type="entry name" value="TRNASYNTHMET"/>
</dbReference>
<dbReference type="SUPFAM" id="SSF47323">
    <property type="entry name" value="Anticodon-binding domain of a subclass of class I aminoacyl-tRNA synthetases"/>
    <property type="match status" value="1"/>
</dbReference>
<dbReference type="SUPFAM" id="SSF57770">
    <property type="entry name" value="Methionyl-tRNA synthetase (MetRS), Zn-domain"/>
    <property type="match status" value="1"/>
</dbReference>
<dbReference type="SUPFAM" id="SSF50249">
    <property type="entry name" value="Nucleic acid-binding proteins"/>
    <property type="match status" value="1"/>
</dbReference>
<dbReference type="SUPFAM" id="SSF52374">
    <property type="entry name" value="Nucleotidylyl transferase"/>
    <property type="match status" value="1"/>
</dbReference>
<dbReference type="PROSITE" id="PS00178">
    <property type="entry name" value="AA_TRNA_LIGASE_I"/>
    <property type="match status" value="1"/>
</dbReference>
<dbReference type="PROSITE" id="PS50886">
    <property type="entry name" value="TRBD"/>
    <property type="match status" value="1"/>
</dbReference>
<protein>
    <recommendedName>
        <fullName evidence="1">Methionine--tRNA ligase</fullName>
        <ecNumber evidence="1">6.1.1.10</ecNumber>
    </recommendedName>
    <alternativeName>
        <fullName evidence="1">Methionyl-tRNA synthetase</fullName>
        <shortName evidence="1">MetRS</shortName>
    </alternativeName>
</protein>